<evidence type="ECO:0000250" key="1">
    <source>
        <dbReference type="UniProtKB" id="Q9NQG7"/>
    </source>
</evidence>
<evidence type="ECO:0000256" key="2">
    <source>
        <dbReference type="SAM" id="MobiDB-lite"/>
    </source>
</evidence>
<evidence type="ECO:0000269" key="3">
    <source>
    </source>
</evidence>
<evidence type="ECO:0000269" key="4">
    <source>
    </source>
</evidence>
<evidence type="ECO:0000269" key="5">
    <source>
    </source>
</evidence>
<evidence type="ECO:0000305" key="6"/>
<comment type="function">
    <text evidence="1">Component of the BLOC-3 complex, a complex that acts as a guanine exchange factor (GEF) for RAB32 and RAB38, promotes the exchange of GDP to GTP, converting them from an inactive GDP-bound form into an active GTP-bound form. The BLOC-3 complex plays an important role in the control of melanin production and melanosome biogenesis and promotes the membrane localization of RAB32 and RAB38.</text>
</comment>
<comment type="subunit">
    <text evidence="1 4 5">Component of the biogenesis of lysosome-related organelles complex-3 (or BLOC-3), a heterodimer of HPS1 and HPS4. HPS4 and the BLOC-3 complex interact with the GTP-bound form of RAB9B but not with the GDP-bound form of RAB9B (By similarity). HPS4 and the BLOC-3 complex interact with the GTP-bound form of RAB9A but not with the GDP-bound form of RAB9A (PubMed:20048159, PubMed:26620560). HPS4 does not interact RAB4A and RAB7A (PubMed:26620560).</text>
</comment>
<comment type="tissue specificity">
    <text>Highly expressed in heart, brain, liver and testis. Expressed at lower level in skeletal muscle.</text>
</comment>
<comment type="disease">
    <text evidence="3">Defects in Hps4 are the cause of the light ear (le) mutant which exhibits hypopigmentation associated with defects of multiple cytoplasmic organelles, including melanosomes, lysosomes, and granular elements of platelets (PubMed:11836498).</text>
</comment>
<keyword id="KW-0015">Albinism</keyword>
<keyword id="KW-0225">Disease variant</keyword>
<keyword id="KW-0344">Guanine-nucleotide releasing factor</keyword>
<keyword id="KW-1185">Reference proteome</keyword>
<gene>
    <name type="primary">Hps4</name>
    <name type="synonym">Le</name>
</gene>
<accession>Q99KG7</accession>
<name>HPS4_MOUSE</name>
<protein>
    <recommendedName>
        <fullName evidence="6">BLOC-3 complex member HPS4</fullName>
    </recommendedName>
    <alternativeName>
        <fullName>Hermansky-Pudlak syndrome 4 protein homolog</fullName>
    </alternativeName>
    <alternativeName>
        <fullName>Light-ear protein</fullName>
        <shortName>Le protein</shortName>
    </alternativeName>
</protein>
<organism>
    <name type="scientific">Mus musculus</name>
    <name type="common">Mouse</name>
    <dbReference type="NCBI Taxonomy" id="10090"/>
    <lineage>
        <taxon>Eukaryota</taxon>
        <taxon>Metazoa</taxon>
        <taxon>Chordata</taxon>
        <taxon>Craniata</taxon>
        <taxon>Vertebrata</taxon>
        <taxon>Euteleostomi</taxon>
        <taxon>Mammalia</taxon>
        <taxon>Eutheria</taxon>
        <taxon>Euarchontoglires</taxon>
        <taxon>Glires</taxon>
        <taxon>Rodentia</taxon>
        <taxon>Myomorpha</taxon>
        <taxon>Muroidea</taxon>
        <taxon>Muridae</taxon>
        <taxon>Murinae</taxon>
        <taxon>Mus</taxon>
        <taxon>Mus</taxon>
    </lineage>
</organism>
<reference key="1">
    <citation type="journal article" date="2002" name="Nat. Genet.">
        <title>Hermansky-Pudlak syndrome is caused by mutations in HPS4, the human homolog of the mouse light-ear gene.</title>
        <authorList>
            <person name="Suzuki T."/>
            <person name="Li W."/>
            <person name="Zhang Q."/>
            <person name="Karim A."/>
            <person name="Novak E.K."/>
            <person name="Sviderskaya E.V."/>
            <person name="Hill S.P."/>
            <person name="Bennett D.C."/>
            <person name="Levin A.V."/>
            <person name="Nieuwenhuis H.K."/>
            <person name="Fong C.-T."/>
            <person name="Castellan C."/>
            <person name="Miterski B."/>
            <person name="Swank R.T."/>
            <person name="Spritz R.A."/>
        </authorList>
    </citation>
    <scope>NUCLEOTIDE SEQUENCE [GENOMIC DNA]</scope>
    <scope>DISEASE</scope>
    <scope>VARIANT LE 51-GLU--LEU-671 DEL</scope>
    <source>
        <strain>129/SvJ</strain>
    </source>
</reference>
<reference key="2">
    <citation type="journal article" date="2004" name="Genome Res.">
        <title>The status, quality, and expansion of the NIH full-length cDNA project: the Mammalian Gene Collection (MGC).</title>
        <authorList>
            <consortium name="The MGC Project Team"/>
        </authorList>
    </citation>
    <scope>NUCLEOTIDE SEQUENCE [LARGE SCALE MRNA] OF 287-671</scope>
    <source>
        <tissue>Mammary gland</tissue>
    </source>
</reference>
<reference key="3">
    <citation type="journal article" date="2010" name="J. Biol. Chem.">
        <title>Assembly of the biogenesis of lysosome-related organelles complex-3 (BLOC-3) and its interaction with Rab9.</title>
        <authorList>
            <person name="Kloer D.P."/>
            <person name="Rojas R."/>
            <person name="Ivan V."/>
            <person name="Moriyama K."/>
            <person name="van Vlijmen T."/>
            <person name="Murthy N."/>
            <person name="Ghirlando R."/>
            <person name="van der Sluijs P."/>
            <person name="Hurley J.H."/>
            <person name="Bonifacino J.S."/>
        </authorList>
    </citation>
    <scope>INTERACTION WITH RAB9A</scope>
    <scope>ABSENCE OF INTERACTION WITH RAB4A AND RAB7A</scope>
</reference>
<reference key="4">
    <citation type="journal article" date="2016" name="J. Biol. Chem.">
        <title>RUTBC1 functions as a GTPase-activating protein for Rab32/38 and regulates melanogenic enzyme trafficking in melanocytes.</title>
        <authorList>
            <person name="Marubashi S."/>
            <person name="Shimada H."/>
            <person name="Fukuda M."/>
            <person name="Ohbayashi N."/>
        </authorList>
    </citation>
    <scope>INTERACTION WITH RAB9A</scope>
</reference>
<sequence length="671" mass="72662">MATTTPPETKSAAWWNYFFLYDGSKVKGEGDPTRAGICYFYPPQTLLDQQELLCGQLAGVVRCLWDLSGTPPMLIRMRNLKFAIRADGDYLWALGCGVEISDASCRQFLDQLIGFFHFYMGPVSLAYKSHPQEELSLQWDTSITQVLRSTSESHRIFNALWNLDRTKVEPLLLLKAALILQTCQRSPHVLAGCILYKGLIVNSQLLPSLTAKVLLHQTVPADQRLPGAGAAPQETGAALPPDVQITSVFLSEEEVASLHEFPVEHETRLQGSSVQYPPWDQSSPTQAEDAWASAAIPEPTPHDGACPSGSGADERLPRLEQECAGPTGLCTTACGQGSGLSSRLQKELCLSREELDSSEMHVSEAQEAFPPLPALGDLETLHSSHSAPTLPEDTAICSCLHPCPLERLPESGRLGQLADLPLTNGQTQVPGTDPLPSSMPVALPPQHPVGVEPSVEPYGNGAQESHSALPRSSRSPDSPGPSPSADRTGFKPSPSGRHAGLVPMNLYTHSVNGLVLSLLAEETLLSDTAAIEEVYHSSLASLNGLEVHLKETLPRDEASLTSSTYNFLHYDRIQSVLSANLPLVTAPQDRRFLQAVNLMHSDFALLPMLYEMTIRNASTAVYACSSPAQETYFQQLAPTARSSGFPNPQDCAFSLAGKAKQKLLKHGVNLL</sequence>
<proteinExistence type="evidence at protein level"/>
<feature type="chain" id="PRO_0000084053" description="BLOC-3 complex member HPS4">
    <location>
        <begin position="1"/>
        <end position="671"/>
    </location>
</feature>
<feature type="region of interest" description="Disordered" evidence="2">
    <location>
        <begin position="269"/>
        <end position="291"/>
    </location>
</feature>
<feature type="region of interest" description="Disordered" evidence="2">
    <location>
        <begin position="417"/>
        <end position="497"/>
    </location>
</feature>
<feature type="compositionally biased region" description="Polar residues" evidence="2">
    <location>
        <begin position="269"/>
        <end position="286"/>
    </location>
</feature>
<feature type="compositionally biased region" description="Low complexity" evidence="2">
    <location>
        <begin position="467"/>
        <end position="477"/>
    </location>
</feature>
<feature type="sequence variant" description="In Le." evidence="3">
    <location>
        <begin position="51"/>
        <end position="671"/>
    </location>
</feature>
<feature type="sequence conflict" description="In Ref. 2." evidence="6" ref="2">
    <original>AEDA</original>
    <variation>PRVR</variation>
    <location>
        <begin position="287"/>
        <end position="290"/>
    </location>
</feature>
<dbReference type="EMBL" id="AY043414">
    <property type="protein sequence ID" value="AAK95331.1"/>
    <property type="molecule type" value="Genomic_DNA"/>
</dbReference>
<dbReference type="EMBL" id="AY043402">
    <property type="protein sequence ID" value="AAK95331.1"/>
    <property type="status" value="JOINED"/>
    <property type="molecule type" value="Genomic_DNA"/>
</dbReference>
<dbReference type="EMBL" id="AY043403">
    <property type="protein sequence ID" value="AAK95331.1"/>
    <property type="status" value="JOINED"/>
    <property type="molecule type" value="Genomic_DNA"/>
</dbReference>
<dbReference type="EMBL" id="AY043404">
    <property type="protein sequence ID" value="AAK95331.1"/>
    <property type="status" value="JOINED"/>
    <property type="molecule type" value="Genomic_DNA"/>
</dbReference>
<dbReference type="EMBL" id="AY043405">
    <property type="protein sequence ID" value="AAK95331.1"/>
    <property type="status" value="JOINED"/>
    <property type="molecule type" value="Genomic_DNA"/>
</dbReference>
<dbReference type="EMBL" id="AY043406">
    <property type="protein sequence ID" value="AAK95331.1"/>
    <property type="status" value="JOINED"/>
    <property type="molecule type" value="Genomic_DNA"/>
</dbReference>
<dbReference type="EMBL" id="AY043407">
    <property type="protein sequence ID" value="AAK95331.1"/>
    <property type="status" value="JOINED"/>
    <property type="molecule type" value="Genomic_DNA"/>
</dbReference>
<dbReference type="EMBL" id="AY043408">
    <property type="protein sequence ID" value="AAK95331.1"/>
    <property type="status" value="JOINED"/>
    <property type="molecule type" value="Genomic_DNA"/>
</dbReference>
<dbReference type="EMBL" id="AY043409">
    <property type="protein sequence ID" value="AAK95331.1"/>
    <property type="status" value="JOINED"/>
    <property type="molecule type" value="Genomic_DNA"/>
</dbReference>
<dbReference type="EMBL" id="AY043410">
    <property type="protein sequence ID" value="AAK95331.1"/>
    <property type="status" value="JOINED"/>
    <property type="molecule type" value="Genomic_DNA"/>
</dbReference>
<dbReference type="EMBL" id="AY043411">
    <property type="protein sequence ID" value="AAK95331.1"/>
    <property type="status" value="JOINED"/>
    <property type="molecule type" value="Genomic_DNA"/>
</dbReference>
<dbReference type="EMBL" id="AY043412">
    <property type="protein sequence ID" value="AAK95331.1"/>
    <property type="status" value="JOINED"/>
    <property type="molecule type" value="Genomic_DNA"/>
</dbReference>
<dbReference type="EMBL" id="AY043413">
    <property type="protein sequence ID" value="AAK95331.1"/>
    <property type="status" value="JOINED"/>
    <property type="molecule type" value="Genomic_DNA"/>
</dbReference>
<dbReference type="EMBL" id="AY043415">
    <property type="protein sequence ID" value="AAK95332.1"/>
    <property type="molecule type" value="mRNA"/>
</dbReference>
<dbReference type="EMBL" id="BC004668">
    <property type="protein sequence ID" value="AAH04668.1"/>
    <property type="molecule type" value="mRNA"/>
</dbReference>
<dbReference type="CCDS" id="CCDS19540.1"/>
<dbReference type="RefSeq" id="NP_001346782.1">
    <property type="nucleotide sequence ID" value="NM_001359853.1"/>
</dbReference>
<dbReference type="RefSeq" id="NP_619587.3">
    <property type="nucleotide sequence ID" value="NM_138646.3"/>
</dbReference>
<dbReference type="RefSeq" id="XP_006534893.1">
    <property type="nucleotide sequence ID" value="XM_006534830.2"/>
</dbReference>
<dbReference type="RefSeq" id="XP_006534894.1">
    <property type="nucleotide sequence ID" value="XM_006534831.5"/>
</dbReference>
<dbReference type="RefSeq" id="XP_006534895.1">
    <property type="nucleotide sequence ID" value="XM_006534832.4"/>
</dbReference>
<dbReference type="RefSeq" id="XP_030110071.1">
    <property type="nucleotide sequence ID" value="XM_030254211.2"/>
</dbReference>
<dbReference type="RefSeq" id="XP_036020803.1">
    <property type="nucleotide sequence ID" value="XM_036164910.1"/>
</dbReference>
<dbReference type="BioGRID" id="228683">
    <property type="interactions" value="1"/>
</dbReference>
<dbReference type="ComplexPortal" id="CPX-5083">
    <property type="entry name" value="BLOC-3 complex"/>
</dbReference>
<dbReference type="FunCoup" id="Q99KG7">
    <property type="interactions" value="2369"/>
</dbReference>
<dbReference type="IntAct" id="Q99KG7">
    <property type="interactions" value="1"/>
</dbReference>
<dbReference type="STRING" id="10090.ENSMUSP00000107978"/>
<dbReference type="iPTMnet" id="Q99KG7"/>
<dbReference type="PhosphoSitePlus" id="Q99KG7"/>
<dbReference type="PaxDb" id="10090-ENSMUSP00000047920"/>
<dbReference type="ProteomicsDB" id="267015"/>
<dbReference type="Pumba" id="Q99KG7"/>
<dbReference type="Antibodypedia" id="54828">
    <property type="antibodies" value="50 antibodies from 17 providers"/>
</dbReference>
<dbReference type="Ensembl" id="ENSMUST00000035279.4">
    <property type="protein sequence ID" value="ENSMUSP00000047920.4"/>
    <property type="gene ID" value="ENSMUSG00000042328.14"/>
</dbReference>
<dbReference type="Ensembl" id="ENSMUST00000112359.9">
    <property type="protein sequence ID" value="ENSMUSP00000107978.3"/>
    <property type="gene ID" value="ENSMUSG00000042328.14"/>
</dbReference>
<dbReference type="GeneID" id="192232"/>
<dbReference type="KEGG" id="mmu:192232"/>
<dbReference type="UCSC" id="uc008ytd.2">
    <property type="organism name" value="mouse"/>
</dbReference>
<dbReference type="AGR" id="MGI:2177742"/>
<dbReference type="CTD" id="89781"/>
<dbReference type="MGI" id="MGI:2177742">
    <property type="gene designation" value="Hps4"/>
</dbReference>
<dbReference type="VEuPathDB" id="HostDB:ENSMUSG00000042328"/>
<dbReference type="eggNOG" id="ENOG502QSIZ">
    <property type="taxonomic scope" value="Eukaryota"/>
</dbReference>
<dbReference type="GeneTree" id="ENSGT00390000007349"/>
<dbReference type="HOGENOM" id="CLU_028579_0_0_1"/>
<dbReference type="InParanoid" id="Q99KG7"/>
<dbReference type="OMA" id="YACCSPV"/>
<dbReference type="OrthoDB" id="16754at2759"/>
<dbReference type="PhylomeDB" id="Q99KG7"/>
<dbReference type="TreeFam" id="TF332819"/>
<dbReference type="Reactome" id="R-MMU-8876198">
    <property type="pathway name" value="RAB GEFs exchange GTP for GDP on RABs"/>
</dbReference>
<dbReference type="BioGRID-ORCS" id="192232">
    <property type="hits" value="3 hits in 79 CRISPR screens"/>
</dbReference>
<dbReference type="PRO" id="PR:Q99KG7"/>
<dbReference type="Proteomes" id="UP000000589">
    <property type="component" value="Chromosome 5"/>
</dbReference>
<dbReference type="RNAct" id="Q99KG7">
    <property type="molecule type" value="protein"/>
</dbReference>
<dbReference type="Bgee" id="ENSMUSG00000042328">
    <property type="expression patterns" value="Expressed in internal carotid artery and 259 other cell types or tissues"/>
</dbReference>
<dbReference type="ExpressionAtlas" id="Q99KG7">
    <property type="expression patterns" value="baseline and differential"/>
</dbReference>
<dbReference type="GO" id="GO:0031085">
    <property type="term" value="C:BLOC-3 complex"/>
    <property type="evidence" value="ECO:0000250"/>
    <property type="project" value="UniProtKB"/>
</dbReference>
<dbReference type="GO" id="GO:0005737">
    <property type="term" value="C:cytoplasm"/>
    <property type="evidence" value="ECO:0000250"/>
    <property type="project" value="UniProtKB"/>
</dbReference>
<dbReference type="GO" id="GO:0031410">
    <property type="term" value="C:cytoplasmic vesicle"/>
    <property type="evidence" value="ECO:0000314"/>
    <property type="project" value="MGI"/>
</dbReference>
<dbReference type="GO" id="GO:0005764">
    <property type="term" value="C:lysosome"/>
    <property type="evidence" value="ECO:0000250"/>
    <property type="project" value="UniProtKB"/>
</dbReference>
<dbReference type="GO" id="GO:0042470">
    <property type="term" value="C:melanosome"/>
    <property type="evidence" value="ECO:0000250"/>
    <property type="project" value="UniProtKB"/>
</dbReference>
<dbReference type="GO" id="GO:0016020">
    <property type="term" value="C:membrane"/>
    <property type="evidence" value="ECO:0000250"/>
    <property type="project" value="UniProtKB"/>
</dbReference>
<dbReference type="GO" id="GO:0042827">
    <property type="term" value="C:platelet dense granule"/>
    <property type="evidence" value="ECO:0007669"/>
    <property type="project" value="Ensembl"/>
</dbReference>
<dbReference type="GO" id="GO:0005085">
    <property type="term" value="F:guanyl-nucleotide exchange factor activity"/>
    <property type="evidence" value="ECO:0007669"/>
    <property type="project" value="UniProtKB-KW"/>
</dbReference>
<dbReference type="GO" id="GO:0046983">
    <property type="term" value="F:protein dimerization activity"/>
    <property type="evidence" value="ECO:0000250"/>
    <property type="project" value="UniProtKB"/>
</dbReference>
<dbReference type="GO" id="GO:0042803">
    <property type="term" value="F:protein homodimerization activity"/>
    <property type="evidence" value="ECO:0000250"/>
    <property type="project" value="UniProtKB"/>
</dbReference>
<dbReference type="GO" id="GO:0031267">
    <property type="term" value="F:small GTPase binding"/>
    <property type="evidence" value="ECO:0000353"/>
    <property type="project" value="UniProtKB"/>
</dbReference>
<dbReference type="GO" id="GO:0007596">
    <property type="term" value="P:blood coagulation"/>
    <property type="evidence" value="ECO:0000315"/>
    <property type="project" value="MGI"/>
</dbReference>
<dbReference type="GO" id="GO:0046907">
    <property type="term" value="P:intracellular transport"/>
    <property type="evidence" value="ECO:0000303"/>
    <property type="project" value="ComplexPortal"/>
</dbReference>
<dbReference type="GO" id="GO:0007040">
    <property type="term" value="P:lysosome organization"/>
    <property type="evidence" value="ECO:0000250"/>
    <property type="project" value="UniProtKB"/>
</dbReference>
<dbReference type="GO" id="GO:0030318">
    <property type="term" value="P:melanocyte differentiation"/>
    <property type="evidence" value="ECO:0000315"/>
    <property type="project" value="MGI"/>
</dbReference>
<dbReference type="GO" id="GO:1903232">
    <property type="term" value="P:melanosome assembly"/>
    <property type="evidence" value="ECO:0000250"/>
    <property type="project" value="UniProtKB"/>
</dbReference>
<dbReference type="GO" id="GO:0060155">
    <property type="term" value="P:platelet dense granule organization"/>
    <property type="evidence" value="ECO:0000303"/>
    <property type="project" value="ComplexPortal"/>
</dbReference>
<dbReference type="GO" id="GO:0050821">
    <property type="term" value="P:protein stabilization"/>
    <property type="evidence" value="ECO:0000250"/>
    <property type="project" value="UniProtKB"/>
</dbReference>
<dbReference type="GO" id="GO:0006605">
    <property type="term" value="P:protein targeting"/>
    <property type="evidence" value="ECO:0000250"/>
    <property type="project" value="UniProtKB"/>
</dbReference>
<dbReference type="GO" id="GO:0016192">
    <property type="term" value="P:vesicle-mediated transport"/>
    <property type="evidence" value="ECO:0007669"/>
    <property type="project" value="InterPro"/>
</dbReference>
<dbReference type="InterPro" id="IPR043987">
    <property type="entry name" value="CCZ1/INTU/HSP4_longin_1"/>
</dbReference>
<dbReference type="InterPro" id="IPR043989">
    <property type="entry name" value="CCZ1/INTU/HSP4_longin_3"/>
</dbReference>
<dbReference type="InterPro" id="IPR026091">
    <property type="entry name" value="HPS4"/>
</dbReference>
<dbReference type="PANTHER" id="PTHR14407:SF9">
    <property type="entry name" value="BLOC-3 COMPLEX MEMBER HPS4"/>
    <property type="match status" value="1"/>
</dbReference>
<dbReference type="PANTHER" id="PTHR14407">
    <property type="entry name" value="HERMANSKY-PUDLAK SYNDROME 4 PROTEIN LIGHT-EAR PROTEIN-RELATED"/>
    <property type="match status" value="1"/>
</dbReference>
<dbReference type="Pfam" id="PF19031">
    <property type="entry name" value="Intu_longin_1"/>
    <property type="match status" value="1"/>
</dbReference>
<dbReference type="Pfam" id="PF19033">
    <property type="entry name" value="Intu_longin_3"/>
    <property type="match status" value="1"/>
</dbReference>